<name>CTPI_MYCLE</name>
<feature type="chain" id="PRO_0000046346" description="Probable cation-transporting ATPase I">
    <location>
        <begin position="1"/>
        <end position="1609"/>
    </location>
</feature>
<feature type="transmembrane region" description="Helical" evidence="2">
    <location>
        <begin position="30"/>
        <end position="50"/>
    </location>
</feature>
<feature type="transmembrane region" description="Helical" evidence="2">
    <location>
        <begin position="176"/>
        <end position="196"/>
    </location>
</feature>
<feature type="transmembrane region" description="Helical" evidence="2">
    <location>
        <begin position="238"/>
        <end position="258"/>
    </location>
</feature>
<feature type="transmembrane region" description="Helical" evidence="2">
    <location>
        <begin position="357"/>
        <end position="377"/>
    </location>
</feature>
<feature type="transmembrane region" description="Helical" evidence="2">
    <location>
        <begin position="641"/>
        <end position="661"/>
    </location>
</feature>
<feature type="transmembrane region" description="Helical" evidence="2">
    <location>
        <begin position="673"/>
        <end position="693"/>
    </location>
</feature>
<feature type="transmembrane region" description="Helical" evidence="2">
    <location>
        <begin position="778"/>
        <end position="798"/>
    </location>
</feature>
<feature type="transmembrane region" description="Helical" evidence="2">
    <location>
        <begin position="921"/>
        <end position="941"/>
    </location>
</feature>
<feature type="transmembrane region" description="Helical" evidence="2">
    <location>
        <begin position="969"/>
        <end position="989"/>
    </location>
</feature>
<feature type="transmembrane region" description="Helical" evidence="2">
    <location>
        <begin position="997"/>
        <end position="1017"/>
    </location>
</feature>
<feature type="transmembrane region" description="Helical" evidence="2">
    <location>
        <begin position="1396"/>
        <end position="1416"/>
    </location>
</feature>
<feature type="transmembrane region" description="Helical" evidence="2">
    <location>
        <begin position="1426"/>
        <end position="1446"/>
    </location>
</feature>
<feature type="transmembrane region" description="Helical" evidence="2">
    <location>
        <begin position="1542"/>
        <end position="1562"/>
    </location>
</feature>
<feature type="transmembrane region" description="Helical" evidence="2">
    <location>
        <begin position="1573"/>
        <end position="1593"/>
    </location>
</feature>
<feature type="region of interest" description="Disordered" evidence="3">
    <location>
        <begin position="1447"/>
        <end position="1476"/>
    </location>
</feature>
<feature type="compositionally biased region" description="Acidic residues" evidence="3">
    <location>
        <begin position="1449"/>
        <end position="1462"/>
    </location>
</feature>
<feature type="active site" description="4-aspartylphosphate intermediate" evidence="1">
    <location>
        <position position="1053"/>
    </location>
</feature>
<feature type="binding site" evidence="1">
    <location>
        <position position="1335"/>
    </location>
    <ligand>
        <name>Mg(2+)</name>
        <dbReference type="ChEBI" id="CHEBI:18420"/>
    </ligand>
</feature>
<feature type="binding site" evidence="1">
    <location>
        <position position="1339"/>
    </location>
    <ligand>
        <name>Mg(2+)</name>
        <dbReference type="ChEBI" id="CHEBI:18420"/>
    </ligand>
</feature>
<evidence type="ECO:0000250" key="1"/>
<evidence type="ECO:0000255" key="2"/>
<evidence type="ECO:0000256" key="3">
    <source>
        <dbReference type="SAM" id="MobiDB-lite"/>
    </source>
</evidence>
<evidence type="ECO:0000305" key="4"/>
<protein>
    <recommendedName>
        <fullName>Probable cation-transporting ATPase I</fullName>
        <ecNumber>7.2.2.-</ecNumber>
    </recommendedName>
</protein>
<sequence>MKIPHVTDPVSNMVGGMAQVVRASTHAATGAVNTMQMLASPVAEFAWPVVQSVAKSTGRALGTGHSPNFANRVDPPVRWHNGQRVHLDLDPLLPFPRWHEYAAVVEEPVRRIPGVAKGHVEGSLGRLVIELDKNADSDVVLGKVRDVVIALAADLALTGARSAPKVAPFADPGNPLAILMPLTAAVMDLVALSAAVTGWVTRLPAVPQTIRAAAALVNHQPRMVSLLESRLGRVGTDIALSITTAAASGLTQAVGTPLLDLACRGLQLSEAAAHQRVWRDREPQLASPKRPQAPVVPVISSAGEKSHAAGHNWTAAASNEASHLVVGGSIDAAIDTAKGSMKGPVESYVDSAANGSLIAAASALLAGGGTEDAAGAILAGVPRAAHMGQQAFAATLGRGLANAGQLVLDPGALRRLDQVKVVVIDGAALRGDHRAVLLARGNTPGWDDDRVYEVTDALLHGERAPEPDPDESPATGARLRWVPLQGPSATPVQGREHADLVVNGECVGGVDVGWEVDPYAIPLLQTAHRTGARVVLRHVAGTEDLSASVGATHPPGTPLLKLVRELRTDRGPVLLITAVHRDFASTDTLAALAIADVGVALDDPHAATPWTADIITGTDLAAAVRILSALPVARSASESSVHLAQGGTTLAGLLLITASAGSKSASPITLRRWFSPVNAAAATALVTGVVSASKVLRLPDPTPQPLTAWHALDPEIVYSRLAGVTQPLAVEPGTPDWRRRLDDLSYTRALSPLRKPVTKLARLASATRQEFADPLTPILAVGAAASAIVGSNIDALLVAGVMTVNAITGGVQRLRAEAAAAELFAEQDQLVRRVVVPAVATTRRRLEAAQHATRTVTVSAKSLRAGDVIDLAAPEVVPADARVLVAEDLEVDESLLTGESLPVDKRVDPVAINDADRASMLFEGSAIVAGHARAIVVATGVGTAAHRAISAVADVEVSAGVQARLRELTSKVLPLTLAGGAAVTGLALLRRASLRQAVADGVAIAVAAVPEGLPLVATLSQLAAAQRLTAKGALVRSPRTIEALGRVDTICFDKTGTLTENRLRVVCAVPNTRMPHDPLPDITDPHSAAVLRDAARASTQPHDGQGHTHATDEAILTAASSLNSHTDSTWSLIAEVPFESSRGYAAAIGITGNGKAPMLMLKGAPEKILPRCRFADPEADVAHAESLVRHLAEQGLRVLAVAQCSWGHDTTDDNDTDADAVDAAAHDLELVGYIGLADTARPSSRPLIEALVTAGRNVVLITGDHPITARAIAQQLGLRSDARVVNGTELIGLDEDACAELAADVQVFARVSPEQKVQIVAALQRCGQVTAMVGDGANDAAAIRMADVGIGVSGRGSSAARGAADIVLTDDDLGVLLDALVEGRSMWAGVRDAVTILVGGNVGEVVFTIIGTVFGAGRAPVGTRQLLLVNLLTDMFPALSIAVTSQYEEPGEDEYQTDEEADEARRTHQHEVLTGPTPSLDAPLMRQIVNRGVVTAAGATTAWAIGRWTPGTERRTATMGLTALVTTQLAQTLLTRRHSPLVVATALGSAGVLIGIIQTPVISQFFGCTPLGPIAWSGVITATAGATAVSVLAPQWLNKAFGIAQLNQE</sequence>
<dbReference type="EC" id="7.2.2.-"/>
<dbReference type="EMBL" id="AL022118">
    <property type="protein sequence ID" value="CAA17934.1"/>
    <property type="molecule type" value="Genomic_DNA"/>
</dbReference>
<dbReference type="EMBL" id="AL583926">
    <property type="protein sequence ID" value="CAC32203.1"/>
    <property type="molecule type" value="Genomic_DNA"/>
</dbReference>
<dbReference type="PIR" id="E87243">
    <property type="entry name" value="E87243"/>
</dbReference>
<dbReference type="RefSeq" id="NP_302704.1">
    <property type="nucleotide sequence ID" value="NC_002677.1"/>
</dbReference>
<dbReference type="RefSeq" id="WP_010909023.1">
    <property type="nucleotide sequence ID" value="NC_002677.1"/>
</dbReference>
<dbReference type="SMR" id="O53114"/>
<dbReference type="STRING" id="272631.gene:17576537"/>
<dbReference type="KEGG" id="mle:ML2671"/>
<dbReference type="PATRIC" id="fig|272631.5.peg.5145"/>
<dbReference type="Leproma" id="ML2671"/>
<dbReference type="eggNOG" id="COG0474">
    <property type="taxonomic scope" value="Bacteria"/>
</dbReference>
<dbReference type="HOGENOM" id="CLU_002360_0_1_11"/>
<dbReference type="OrthoDB" id="9814270at2"/>
<dbReference type="Proteomes" id="UP000000806">
    <property type="component" value="Chromosome"/>
</dbReference>
<dbReference type="GO" id="GO:0043231">
    <property type="term" value="C:intracellular membrane-bounded organelle"/>
    <property type="evidence" value="ECO:0007669"/>
    <property type="project" value="TreeGrafter"/>
</dbReference>
<dbReference type="GO" id="GO:0005886">
    <property type="term" value="C:plasma membrane"/>
    <property type="evidence" value="ECO:0007669"/>
    <property type="project" value="UniProtKB-SubCell"/>
</dbReference>
<dbReference type="GO" id="GO:0005524">
    <property type="term" value="F:ATP binding"/>
    <property type="evidence" value="ECO:0007669"/>
    <property type="project" value="UniProtKB-KW"/>
</dbReference>
<dbReference type="GO" id="GO:0016887">
    <property type="term" value="F:ATP hydrolysis activity"/>
    <property type="evidence" value="ECO:0007669"/>
    <property type="project" value="InterPro"/>
</dbReference>
<dbReference type="GO" id="GO:0046872">
    <property type="term" value="F:metal ion binding"/>
    <property type="evidence" value="ECO:0007669"/>
    <property type="project" value="UniProtKB-KW"/>
</dbReference>
<dbReference type="GO" id="GO:0005388">
    <property type="term" value="F:P-type calcium transporter activity"/>
    <property type="evidence" value="ECO:0007669"/>
    <property type="project" value="TreeGrafter"/>
</dbReference>
<dbReference type="FunFam" id="2.70.150.10:FF:000082">
    <property type="entry name" value="Cation-transporter ATPase I CtpI"/>
    <property type="match status" value="1"/>
</dbReference>
<dbReference type="Gene3D" id="3.40.1110.10">
    <property type="entry name" value="Calcium-transporting ATPase, cytoplasmic domain N"/>
    <property type="match status" value="1"/>
</dbReference>
<dbReference type="Gene3D" id="2.70.150.10">
    <property type="entry name" value="Calcium-transporting ATPase, cytoplasmic transduction domain A"/>
    <property type="match status" value="1"/>
</dbReference>
<dbReference type="Gene3D" id="1.20.1110.10">
    <property type="entry name" value="Calcium-transporting ATPase, transmembrane domain"/>
    <property type="match status" value="2"/>
</dbReference>
<dbReference type="Gene3D" id="3.40.50.1000">
    <property type="entry name" value="HAD superfamily/HAD-like"/>
    <property type="match status" value="2"/>
</dbReference>
<dbReference type="InterPro" id="IPR006068">
    <property type="entry name" value="ATPase_P-typ_cation-transptr_C"/>
</dbReference>
<dbReference type="InterPro" id="IPR023299">
    <property type="entry name" value="ATPase_P-typ_cyto_dom_N"/>
</dbReference>
<dbReference type="InterPro" id="IPR018303">
    <property type="entry name" value="ATPase_P-typ_P_site"/>
</dbReference>
<dbReference type="InterPro" id="IPR023298">
    <property type="entry name" value="ATPase_P-typ_TM_dom_sf"/>
</dbReference>
<dbReference type="InterPro" id="IPR008250">
    <property type="entry name" value="ATPase_P-typ_transduc_dom_A_sf"/>
</dbReference>
<dbReference type="InterPro" id="IPR036412">
    <property type="entry name" value="HAD-like_sf"/>
</dbReference>
<dbReference type="InterPro" id="IPR023214">
    <property type="entry name" value="HAD_sf"/>
</dbReference>
<dbReference type="InterPro" id="IPR001757">
    <property type="entry name" value="P_typ_ATPase"/>
</dbReference>
<dbReference type="InterPro" id="IPR044492">
    <property type="entry name" value="P_typ_ATPase_HD_dom"/>
</dbReference>
<dbReference type="NCBIfam" id="TIGR01494">
    <property type="entry name" value="ATPase_P-type"/>
    <property type="match status" value="2"/>
</dbReference>
<dbReference type="PANTHER" id="PTHR24093">
    <property type="entry name" value="CATION TRANSPORTING ATPASE"/>
    <property type="match status" value="1"/>
</dbReference>
<dbReference type="PANTHER" id="PTHR24093:SF513">
    <property type="entry name" value="CATION-TRANSPORTING ATPASE I-RELATED"/>
    <property type="match status" value="1"/>
</dbReference>
<dbReference type="Pfam" id="PF00689">
    <property type="entry name" value="Cation_ATPase_C"/>
    <property type="match status" value="1"/>
</dbReference>
<dbReference type="Pfam" id="PF00122">
    <property type="entry name" value="E1-E2_ATPase"/>
    <property type="match status" value="1"/>
</dbReference>
<dbReference type="Pfam" id="PF00702">
    <property type="entry name" value="Hydrolase"/>
    <property type="match status" value="1"/>
</dbReference>
<dbReference type="PRINTS" id="PR00119">
    <property type="entry name" value="CATATPASE"/>
</dbReference>
<dbReference type="PRINTS" id="PR00120">
    <property type="entry name" value="HATPASE"/>
</dbReference>
<dbReference type="SFLD" id="SFLDS00003">
    <property type="entry name" value="Haloacid_Dehalogenase"/>
    <property type="match status" value="1"/>
</dbReference>
<dbReference type="SFLD" id="SFLDF00027">
    <property type="entry name" value="p-type_atpase"/>
    <property type="match status" value="1"/>
</dbReference>
<dbReference type="SUPFAM" id="SSF81653">
    <property type="entry name" value="Calcium ATPase, transduction domain A"/>
    <property type="match status" value="1"/>
</dbReference>
<dbReference type="SUPFAM" id="SSF81665">
    <property type="entry name" value="Calcium ATPase, transmembrane domain M"/>
    <property type="match status" value="1"/>
</dbReference>
<dbReference type="SUPFAM" id="SSF56784">
    <property type="entry name" value="HAD-like"/>
    <property type="match status" value="1"/>
</dbReference>
<dbReference type="PROSITE" id="PS00154">
    <property type="entry name" value="ATPASE_E1_E2"/>
    <property type="match status" value="1"/>
</dbReference>
<organism>
    <name type="scientific">Mycobacterium leprae (strain TN)</name>
    <dbReference type="NCBI Taxonomy" id="272631"/>
    <lineage>
        <taxon>Bacteria</taxon>
        <taxon>Bacillati</taxon>
        <taxon>Actinomycetota</taxon>
        <taxon>Actinomycetes</taxon>
        <taxon>Mycobacteriales</taxon>
        <taxon>Mycobacteriaceae</taxon>
        <taxon>Mycobacterium</taxon>
    </lineage>
</organism>
<gene>
    <name type="primary">ctpI</name>
    <name type="ordered locus">ML2671</name>
    <name type="ORF">MLCB1913.02</name>
</gene>
<comment type="catalytic activity">
    <reaction>
        <text>ATP + H2O = ADP + phosphate + H(+)</text>
        <dbReference type="Rhea" id="RHEA:13065"/>
        <dbReference type="ChEBI" id="CHEBI:15377"/>
        <dbReference type="ChEBI" id="CHEBI:15378"/>
        <dbReference type="ChEBI" id="CHEBI:30616"/>
        <dbReference type="ChEBI" id="CHEBI:43474"/>
        <dbReference type="ChEBI" id="CHEBI:456216"/>
    </reaction>
</comment>
<comment type="subcellular location">
    <subcellularLocation>
        <location>Cell membrane</location>
        <topology>Multi-pass membrane protein</topology>
    </subcellularLocation>
</comment>
<comment type="similarity">
    <text evidence="4">Belongs to the cation transport ATPase (P-type) (TC 3.A.3) family.</text>
</comment>
<reference key="1">
    <citation type="journal article" date="2001" name="Nature">
        <title>Massive gene decay in the leprosy bacillus.</title>
        <authorList>
            <person name="Cole S.T."/>
            <person name="Eiglmeier K."/>
            <person name="Parkhill J."/>
            <person name="James K.D."/>
            <person name="Thomson N.R."/>
            <person name="Wheeler P.R."/>
            <person name="Honore N."/>
            <person name="Garnier T."/>
            <person name="Churcher C.M."/>
            <person name="Harris D.E."/>
            <person name="Mungall K.L."/>
            <person name="Basham D."/>
            <person name="Brown D."/>
            <person name="Chillingworth T."/>
            <person name="Connor R."/>
            <person name="Davies R.M."/>
            <person name="Devlin K."/>
            <person name="Duthoy S."/>
            <person name="Feltwell T."/>
            <person name="Fraser A."/>
            <person name="Hamlin N."/>
            <person name="Holroyd S."/>
            <person name="Hornsby T."/>
            <person name="Jagels K."/>
            <person name="Lacroix C."/>
            <person name="Maclean J."/>
            <person name="Moule S."/>
            <person name="Murphy L.D."/>
            <person name="Oliver K."/>
            <person name="Quail M.A."/>
            <person name="Rajandream M.A."/>
            <person name="Rutherford K.M."/>
            <person name="Rutter S."/>
            <person name="Seeger K."/>
            <person name="Simon S."/>
            <person name="Simmonds M."/>
            <person name="Skelton J."/>
            <person name="Squares R."/>
            <person name="Squares S."/>
            <person name="Stevens K."/>
            <person name="Taylor K."/>
            <person name="Whitehead S."/>
            <person name="Woodward J.R."/>
            <person name="Barrell B.G."/>
        </authorList>
    </citation>
    <scope>NUCLEOTIDE SEQUENCE [LARGE SCALE GENOMIC DNA]</scope>
    <source>
        <strain>TN</strain>
    </source>
</reference>
<proteinExistence type="inferred from homology"/>
<accession>O53114</accession>
<keyword id="KW-0067">ATP-binding</keyword>
<keyword id="KW-1003">Cell membrane</keyword>
<keyword id="KW-0460">Magnesium</keyword>
<keyword id="KW-0472">Membrane</keyword>
<keyword id="KW-0479">Metal-binding</keyword>
<keyword id="KW-0547">Nucleotide-binding</keyword>
<keyword id="KW-0597">Phosphoprotein</keyword>
<keyword id="KW-1185">Reference proteome</keyword>
<keyword id="KW-1278">Translocase</keyword>
<keyword id="KW-0812">Transmembrane</keyword>
<keyword id="KW-1133">Transmembrane helix</keyword>